<accession>A4QKU9</accession>
<proteinExistence type="inferred from homology"/>
<name>PETL_CRUWA</name>
<feature type="chain" id="PRO_0000300140" description="Cytochrome b6-f complex subunit 6">
    <location>
        <begin position="1"/>
        <end position="31"/>
    </location>
</feature>
<feature type="transmembrane region" description="Helical" evidence="1">
    <location>
        <begin position="4"/>
        <end position="24"/>
    </location>
</feature>
<geneLocation type="chloroplast"/>
<organism>
    <name type="scientific">Crucihimalaya wallichii</name>
    <name type="common">Rock-cress</name>
    <name type="synonym">Arabidopsis campestris</name>
    <dbReference type="NCBI Taxonomy" id="78192"/>
    <lineage>
        <taxon>Eukaryota</taxon>
        <taxon>Viridiplantae</taxon>
        <taxon>Streptophyta</taxon>
        <taxon>Embryophyta</taxon>
        <taxon>Tracheophyta</taxon>
        <taxon>Spermatophyta</taxon>
        <taxon>Magnoliopsida</taxon>
        <taxon>eudicotyledons</taxon>
        <taxon>Gunneridae</taxon>
        <taxon>Pentapetalae</taxon>
        <taxon>rosids</taxon>
        <taxon>malvids</taxon>
        <taxon>Brassicales</taxon>
        <taxon>Brassicaceae</taxon>
        <taxon>Crucihimalayeae</taxon>
        <taxon>Crucihimalaya</taxon>
    </lineage>
</organism>
<sequence length="31" mass="3401">MPTITSYFGFLLAALTITSVLFIGLSKIRLI</sequence>
<protein>
    <recommendedName>
        <fullName evidence="1">Cytochrome b6-f complex subunit 6</fullName>
    </recommendedName>
    <alternativeName>
        <fullName evidence="1">Cytochrome b6-f complex subunit PetL</fullName>
    </alternativeName>
    <alternativeName>
        <fullName evidence="1">Cytochrome b6-f complex subunit VI</fullName>
    </alternativeName>
</protein>
<keyword id="KW-0150">Chloroplast</keyword>
<keyword id="KW-0249">Electron transport</keyword>
<keyword id="KW-0472">Membrane</keyword>
<keyword id="KW-0602">Photosynthesis</keyword>
<keyword id="KW-0934">Plastid</keyword>
<keyword id="KW-0793">Thylakoid</keyword>
<keyword id="KW-0812">Transmembrane</keyword>
<keyword id="KW-1133">Transmembrane helix</keyword>
<keyword id="KW-0813">Transport</keyword>
<gene>
    <name evidence="1" type="primary">petL</name>
</gene>
<reference key="1">
    <citation type="submission" date="2007-03" db="EMBL/GenBank/DDBJ databases">
        <title>Sequencing analysis of Crucihimalaya wallichii chloroplast DNA.</title>
        <authorList>
            <person name="Hosouchi T."/>
            <person name="Tsuruoka H."/>
            <person name="Kotani H."/>
        </authorList>
    </citation>
    <scope>NUCLEOTIDE SEQUENCE [LARGE SCALE GENOMIC DNA]</scope>
</reference>
<dbReference type="EMBL" id="AP009372">
    <property type="protein sequence ID" value="BAF50304.1"/>
    <property type="molecule type" value="Genomic_DNA"/>
</dbReference>
<dbReference type="RefSeq" id="YP_001123480.1">
    <property type="nucleotide sequence ID" value="NC_009271.1"/>
</dbReference>
<dbReference type="SMR" id="A4QKU9"/>
<dbReference type="GeneID" id="4962655"/>
<dbReference type="GO" id="GO:0009535">
    <property type="term" value="C:chloroplast thylakoid membrane"/>
    <property type="evidence" value="ECO:0007669"/>
    <property type="project" value="UniProtKB-SubCell"/>
</dbReference>
<dbReference type="GO" id="GO:0009512">
    <property type="term" value="C:cytochrome b6f complex"/>
    <property type="evidence" value="ECO:0007669"/>
    <property type="project" value="InterPro"/>
</dbReference>
<dbReference type="GO" id="GO:0045158">
    <property type="term" value="F:electron transporter, transferring electrons within cytochrome b6/f complex of photosystem II activity"/>
    <property type="evidence" value="ECO:0007669"/>
    <property type="project" value="UniProtKB-UniRule"/>
</dbReference>
<dbReference type="GO" id="GO:0015979">
    <property type="term" value="P:photosynthesis"/>
    <property type="evidence" value="ECO:0007669"/>
    <property type="project" value="UniProtKB-KW"/>
</dbReference>
<dbReference type="HAMAP" id="MF_00433">
    <property type="entry name" value="Cytb6_f_PetL"/>
    <property type="match status" value="1"/>
</dbReference>
<dbReference type="InterPro" id="IPR007802">
    <property type="entry name" value="Cyt_b6/f_cplx_su6"/>
</dbReference>
<dbReference type="PANTHER" id="PTHR37266">
    <property type="entry name" value="CYTOCHROME B6-F COMPLEX SUBUNIT 6"/>
    <property type="match status" value="1"/>
</dbReference>
<dbReference type="PANTHER" id="PTHR37266:SF1">
    <property type="entry name" value="CYTOCHROME B6-F COMPLEX SUBUNIT 6"/>
    <property type="match status" value="1"/>
</dbReference>
<dbReference type="Pfam" id="PF05115">
    <property type="entry name" value="PetL"/>
    <property type="match status" value="1"/>
</dbReference>
<evidence type="ECO:0000255" key="1">
    <source>
        <dbReference type="HAMAP-Rule" id="MF_00433"/>
    </source>
</evidence>
<comment type="function">
    <text evidence="1">Component of the cytochrome b6-f complex, which mediates electron transfer between photosystem II (PSII) and photosystem I (PSI), cyclic electron flow around PSI, and state transitions. PetL is important for photoautotrophic growth as well as for electron transfer efficiency and stability of the cytochrome b6-f complex.</text>
</comment>
<comment type="subunit">
    <text evidence="1">The 4 large subunits of the cytochrome b6-f complex are cytochrome b6, subunit IV (17 kDa polypeptide, PetD), cytochrome f and the Rieske protein, while the 4 small subunits are PetG, PetL, PetM and PetN. The complex functions as a dimer.</text>
</comment>
<comment type="subcellular location">
    <subcellularLocation>
        <location evidence="1">Plastid</location>
        <location evidence="1">Chloroplast thylakoid membrane</location>
        <topology evidence="1">Single-pass membrane protein</topology>
    </subcellularLocation>
</comment>
<comment type="similarity">
    <text evidence="1">Belongs to the PetL family.</text>
</comment>